<gene>
    <name type="ordered locus">SA0511</name>
</gene>
<reference key="1">
    <citation type="journal article" date="2001" name="Lancet">
        <title>Whole genome sequencing of meticillin-resistant Staphylococcus aureus.</title>
        <authorList>
            <person name="Kuroda M."/>
            <person name="Ohta T."/>
            <person name="Uchiyama I."/>
            <person name="Baba T."/>
            <person name="Yuzawa H."/>
            <person name="Kobayashi I."/>
            <person name="Cui L."/>
            <person name="Oguchi A."/>
            <person name="Aoki K."/>
            <person name="Nagai Y."/>
            <person name="Lian J.-Q."/>
            <person name="Ito T."/>
            <person name="Kanamori M."/>
            <person name="Matsumaru H."/>
            <person name="Maruyama A."/>
            <person name="Murakami H."/>
            <person name="Hosoyama A."/>
            <person name="Mizutani-Ui Y."/>
            <person name="Takahashi N.K."/>
            <person name="Sawano T."/>
            <person name="Inoue R."/>
            <person name="Kaito C."/>
            <person name="Sekimizu K."/>
            <person name="Hirakawa H."/>
            <person name="Kuhara S."/>
            <person name="Goto S."/>
            <person name="Yabuzaki J."/>
            <person name="Kanehisa M."/>
            <person name="Yamashita A."/>
            <person name="Oshima K."/>
            <person name="Furuya K."/>
            <person name="Yoshino C."/>
            <person name="Shiba T."/>
            <person name="Hattori M."/>
            <person name="Ogasawara N."/>
            <person name="Hayashi H."/>
            <person name="Hiramatsu K."/>
        </authorList>
    </citation>
    <scope>NUCLEOTIDE SEQUENCE [LARGE SCALE GENOMIC DNA]</scope>
    <source>
        <strain>N315</strain>
    </source>
</reference>
<reference key="2">
    <citation type="submission" date="2007-10" db="UniProtKB">
        <title>Shotgun proteomic analysis of total and membrane protein extracts of S. aureus strain N315.</title>
        <authorList>
            <person name="Vaezzadeh A.R."/>
            <person name="Deshusses J."/>
            <person name="Lescuyer P."/>
            <person name="Hochstrasser D.F."/>
        </authorList>
    </citation>
    <scope>IDENTIFICATION BY MASS SPECTROMETRY [LARGE SCALE ANALYSIS]</scope>
    <source>
        <strain>N315</strain>
    </source>
</reference>
<sequence length="321" mass="36053">MKKIMITGALGQIGTELVVKCREIYGTDNVLATDIREPEADSPVQNGPFEILDVTDRDRMFELVRDFEADSLMHMAALLSATAEKNPILAWDLNMGGLMNALEAARTYNLHFFTPSSIGAFGDSTPKVNTPQVTIQQPTTMYGVNKVAGELLCQYYFKRFGVDTRSVRFPGLISHVKEPGGGTTDYAVEIYFKAVREGHYTSFIDKGTYMDMMYMDDAIEAIIKLMEADDAKLETRNGYNLSAMSFDPEMVKEAIQEYYPNFTLDYDVDPIRQGIANSWPDSIDTSCSRGEWGFDPKYDLASMTKLMLEAIEQKDTVKNNN</sequence>
<accession>Q7A788</accession>
<feature type="chain" id="PRO_0000270847" description="Uncharacterized epimerase/dehydratase SA0511">
    <location>
        <begin position="1"/>
        <end position="321"/>
    </location>
</feature>
<evidence type="ECO:0000305" key="1"/>
<comment type="similarity">
    <text evidence="1">Belongs to the NAD(P)-dependent epimerase/dehydratase family.</text>
</comment>
<dbReference type="EMBL" id="BA000018">
    <property type="protein sequence ID" value="BAB41742.1"/>
    <property type="molecule type" value="Genomic_DNA"/>
</dbReference>
<dbReference type="PIR" id="C89823">
    <property type="entry name" value="C89823"/>
</dbReference>
<dbReference type="RefSeq" id="WP_000723301.1">
    <property type="nucleotide sequence ID" value="NC_002745.2"/>
</dbReference>
<dbReference type="SMR" id="Q7A788"/>
<dbReference type="EnsemblBacteria" id="BAB41742">
    <property type="protein sequence ID" value="BAB41742"/>
    <property type="gene ID" value="BAB41742"/>
</dbReference>
<dbReference type="KEGG" id="sau:SA0511"/>
<dbReference type="HOGENOM" id="CLU_007383_19_1_9"/>
<dbReference type="GO" id="GO:0008743">
    <property type="term" value="F:L-threonine 3-dehydrogenase activity"/>
    <property type="evidence" value="ECO:0007669"/>
    <property type="project" value="TreeGrafter"/>
</dbReference>
<dbReference type="GO" id="GO:0006567">
    <property type="term" value="P:threonine catabolic process"/>
    <property type="evidence" value="ECO:0007669"/>
    <property type="project" value="TreeGrafter"/>
</dbReference>
<dbReference type="FunFam" id="3.40.50.720:FF:000077">
    <property type="entry name" value="L-threonine 3-dehydrogenase, mitochondrial"/>
    <property type="match status" value="1"/>
</dbReference>
<dbReference type="Gene3D" id="3.40.50.720">
    <property type="entry name" value="NAD(P)-binding Rossmann-like Domain"/>
    <property type="match status" value="1"/>
</dbReference>
<dbReference type="InterPro" id="IPR001509">
    <property type="entry name" value="Epimerase_deHydtase"/>
</dbReference>
<dbReference type="InterPro" id="IPR036291">
    <property type="entry name" value="NAD(P)-bd_dom_sf"/>
</dbReference>
<dbReference type="InterPro" id="IPR051225">
    <property type="entry name" value="NAD(P)_epim/dehydratase"/>
</dbReference>
<dbReference type="PANTHER" id="PTHR42687">
    <property type="entry name" value="L-THREONINE 3-DEHYDROGENASE"/>
    <property type="match status" value="1"/>
</dbReference>
<dbReference type="PANTHER" id="PTHR42687:SF1">
    <property type="entry name" value="L-THREONINE 3-DEHYDROGENASE, MITOCHONDRIAL"/>
    <property type="match status" value="1"/>
</dbReference>
<dbReference type="Pfam" id="PF01370">
    <property type="entry name" value="Epimerase"/>
    <property type="match status" value="1"/>
</dbReference>
<dbReference type="SUPFAM" id="SSF51735">
    <property type="entry name" value="NAD(P)-binding Rossmann-fold domains"/>
    <property type="match status" value="1"/>
</dbReference>
<name>Y511_STAAN</name>
<proteinExistence type="evidence at protein level"/>
<organism>
    <name type="scientific">Staphylococcus aureus (strain N315)</name>
    <dbReference type="NCBI Taxonomy" id="158879"/>
    <lineage>
        <taxon>Bacteria</taxon>
        <taxon>Bacillati</taxon>
        <taxon>Bacillota</taxon>
        <taxon>Bacilli</taxon>
        <taxon>Bacillales</taxon>
        <taxon>Staphylococcaceae</taxon>
        <taxon>Staphylococcus</taxon>
    </lineage>
</organism>
<protein>
    <recommendedName>
        <fullName>Uncharacterized epimerase/dehydratase SA0511</fullName>
    </recommendedName>
</protein>